<evidence type="ECO:0000255" key="1">
    <source>
        <dbReference type="PROSITE-ProRule" id="PRU01247"/>
    </source>
</evidence>
<evidence type="ECO:0000305" key="2"/>
<reference key="1">
    <citation type="journal article" date="1987" name="J. Bacteriol.">
        <title>Yeast plasmids resembling 2 micron DNA: regional similarities and diversities at the molecular level.</title>
        <authorList>
            <person name="Utatsu I."/>
            <person name="Sakamoto S."/>
            <person name="Imura T."/>
            <person name="Toh-e A."/>
        </authorList>
    </citation>
    <scope>NUCLEOTIDE SEQUENCE [GENOMIC DNA]</scope>
    <source>
        <strain>NBRC 0021</strain>
    </source>
</reference>
<protein>
    <recommendedName>
        <fullName>Recombinase Flp protein</fullName>
    </recommendedName>
</protein>
<proteinExistence type="inferred from homology"/>
<geneLocation type="plasmid">
    <name>pSM1</name>
</geneLocation>
<organism>
    <name type="scientific">Lachancea fermentati</name>
    <name type="common">Zygosaccharomyces fermentati</name>
    <dbReference type="NCBI Taxonomy" id="4955"/>
    <lineage>
        <taxon>Eukaryota</taxon>
        <taxon>Fungi</taxon>
        <taxon>Dikarya</taxon>
        <taxon>Ascomycota</taxon>
        <taxon>Saccharomycotina</taxon>
        <taxon>Saccharomycetes</taxon>
        <taxon>Saccharomycetales</taxon>
        <taxon>Saccharomycetaceae</taxon>
        <taxon>Lachancea</taxon>
    </lineage>
</organism>
<comment type="function">
    <text>Catalyzes the recombination between the large inverted repetitions of the plasmid.</text>
</comment>
<comment type="similarity">
    <text evidence="2">Belongs to the 'phage' integrase family.</text>
</comment>
<keyword id="KW-0229">DNA integration</keyword>
<keyword id="KW-0233">DNA recombination</keyword>
<keyword id="KW-0614">Plasmid</keyword>
<name>FLP_LACFM</name>
<feature type="chain" id="PRO_0000197571" description="Recombinase Flp protein">
    <location>
        <begin position="1"/>
        <end position="372"/>
    </location>
</feature>
<feature type="domain" description="Tyr recombinase Flp-type" evidence="1">
    <location>
        <begin position="85"/>
        <end position="367"/>
    </location>
</feature>
<feature type="active site" description="O-(3'-phospho-DNA)-tyrosine intermediate" evidence="1">
    <location>
        <position position="292"/>
    </location>
</feature>
<sequence length="372" mass="42876">MATFSKLSERKRSTFIKYSREIRQSVQYDREAQIVKFNYHLKRPHELKDVLDKTFAPIVFEVSSTKKVESMVELAAKMDKVEGKGGHNAVAEEITKIVRADDIWTLLSGVEVTIQKRAFKRSLRAELKYVLITSFFNCSRHSDLKNADPTKFELVKNRYLNRVLRVLVCETKTRKPRYIYFFPVNKKTDPLIALHDLFSEAEPVPKSRASHQKTDQEWQMLRDSLLTNYDRFIATHAKQAVFGIKHGPKSHLGRHLMSSYLSHTNHGQWVSPFGNWSAGKDTVESNVARAKYVHIQADIPDELFAFLSQYYIQTPSGDFELIDSSEQPTTFINNLSTQEDISKSYGTWTQVVGQDVLEYVHSYAMGKLGIRK</sequence>
<dbReference type="EMBL" id="M18275">
    <property type="protein sequence ID" value="AAA35279.1"/>
    <property type="molecule type" value="Genomic_DNA"/>
</dbReference>
<dbReference type="PIR" id="B34024">
    <property type="entry name" value="B34024"/>
</dbReference>
<dbReference type="RefSeq" id="NP_040495.1">
    <property type="nucleotide sequence ID" value="NC_002054.1"/>
</dbReference>
<dbReference type="SMR" id="P13770"/>
<dbReference type="GO" id="GO:0003677">
    <property type="term" value="F:DNA binding"/>
    <property type="evidence" value="ECO:0007669"/>
    <property type="project" value="InterPro"/>
</dbReference>
<dbReference type="GO" id="GO:0015074">
    <property type="term" value="P:DNA integration"/>
    <property type="evidence" value="ECO:0007669"/>
    <property type="project" value="UniProtKB-KW"/>
</dbReference>
<dbReference type="GO" id="GO:0006310">
    <property type="term" value="P:DNA recombination"/>
    <property type="evidence" value="ECO:0007669"/>
    <property type="project" value="UniProtKB-KW"/>
</dbReference>
<dbReference type="Gene3D" id="1.10.443.10">
    <property type="entry name" value="Intergrase catalytic core"/>
    <property type="match status" value="1"/>
</dbReference>
<dbReference type="InterPro" id="IPR011010">
    <property type="entry name" value="DNA_brk_join_enz"/>
</dbReference>
<dbReference type="InterPro" id="IPR013762">
    <property type="entry name" value="Integrase-like_cat_sf"/>
</dbReference>
<dbReference type="InterPro" id="IPR005626">
    <property type="entry name" value="Recombinase_Flp_C"/>
</dbReference>
<dbReference type="InterPro" id="IPR022647">
    <property type="entry name" value="Recombinase_Flp_N"/>
</dbReference>
<dbReference type="Pfam" id="PF05202">
    <property type="entry name" value="Flp_C"/>
    <property type="match status" value="1"/>
</dbReference>
<dbReference type="Pfam" id="PF03930">
    <property type="entry name" value="Flp_N"/>
    <property type="match status" value="1"/>
</dbReference>
<dbReference type="SUPFAM" id="SSF56349">
    <property type="entry name" value="DNA breaking-rejoining enzymes"/>
    <property type="match status" value="1"/>
</dbReference>
<dbReference type="PROSITE" id="PS51899">
    <property type="entry name" value="TYR_RECOMBINASE_FLP"/>
    <property type="match status" value="1"/>
</dbReference>
<accession>P13770</accession>